<gene>
    <name type="primary">ACOT9</name>
</gene>
<organism>
    <name type="scientific">Bos taurus</name>
    <name type="common">Bovine</name>
    <dbReference type="NCBI Taxonomy" id="9913"/>
    <lineage>
        <taxon>Eukaryota</taxon>
        <taxon>Metazoa</taxon>
        <taxon>Chordata</taxon>
        <taxon>Craniata</taxon>
        <taxon>Vertebrata</taxon>
        <taxon>Euteleostomi</taxon>
        <taxon>Mammalia</taxon>
        <taxon>Eutheria</taxon>
        <taxon>Laurasiatheria</taxon>
        <taxon>Artiodactyla</taxon>
        <taxon>Ruminantia</taxon>
        <taxon>Pecora</taxon>
        <taxon>Bovidae</taxon>
        <taxon>Bovinae</taxon>
        <taxon>Bos</taxon>
    </lineage>
</organism>
<keyword id="KW-0007">Acetylation</keyword>
<keyword id="KW-0378">Hydrolase</keyword>
<keyword id="KW-0472">Membrane</keyword>
<keyword id="KW-0496">Mitochondrion</keyword>
<keyword id="KW-0999">Mitochondrion inner membrane</keyword>
<keyword id="KW-1185">Reference proteome</keyword>
<keyword id="KW-0677">Repeat</keyword>
<keyword id="KW-0719">Serine esterase</keyword>
<keyword id="KW-0809">Transit peptide</keyword>
<feature type="transit peptide" description="Mitochondrion" evidence="1">
    <location>
        <begin position="1"/>
        <end position="21"/>
    </location>
</feature>
<feature type="chain" id="PRO_0000364186" description="Acyl-coenzyme A thioesterase 9, mitochondrial">
    <location>
        <begin position="22"/>
        <end position="437"/>
    </location>
</feature>
<feature type="domain" description="HotDog ACOT-type 1" evidence="4">
    <location>
        <begin position="84"/>
        <end position="207"/>
    </location>
</feature>
<feature type="domain" description="HotDog ACOT-type 2" evidence="4">
    <location>
        <begin position="287"/>
        <end position="399"/>
    </location>
</feature>
<feature type="modified residue" description="N6-acetyllysine" evidence="3">
    <location>
        <position position="101"/>
    </location>
</feature>
<comment type="function">
    <text evidence="2">Mitochondrial acyl-CoA thioesterase. Catalyzes the hydrolysis of acyl-CoAs into free fatty acids and coenzyme A (CoA), regulating their respective intracellular levels. Regulates both mitochondrial lipid and amino acid metabolism.</text>
</comment>
<comment type="catalytic activity">
    <reaction evidence="2">
        <text>butanoyl-CoA + H2O = butanoate + CoA + H(+)</text>
        <dbReference type="Rhea" id="RHEA:40111"/>
        <dbReference type="ChEBI" id="CHEBI:15377"/>
        <dbReference type="ChEBI" id="CHEBI:15378"/>
        <dbReference type="ChEBI" id="CHEBI:17968"/>
        <dbReference type="ChEBI" id="CHEBI:57287"/>
        <dbReference type="ChEBI" id="CHEBI:57371"/>
    </reaction>
    <physiologicalReaction direction="left-to-right" evidence="2">
        <dbReference type="Rhea" id="RHEA:40112"/>
    </physiologicalReaction>
</comment>
<comment type="catalytic activity">
    <reaction evidence="2">
        <text>propanoyl-CoA + H2O = propanoate + CoA + H(+)</text>
        <dbReference type="Rhea" id="RHEA:40103"/>
        <dbReference type="ChEBI" id="CHEBI:15377"/>
        <dbReference type="ChEBI" id="CHEBI:15378"/>
        <dbReference type="ChEBI" id="CHEBI:17272"/>
        <dbReference type="ChEBI" id="CHEBI:57287"/>
        <dbReference type="ChEBI" id="CHEBI:57392"/>
    </reaction>
    <physiologicalReaction direction="left-to-right" evidence="2">
        <dbReference type="Rhea" id="RHEA:40104"/>
    </physiologicalReaction>
</comment>
<comment type="catalytic activity">
    <reaction evidence="2">
        <text>hexadecanoyl-CoA + H2O = hexadecanoate + CoA + H(+)</text>
        <dbReference type="Rhea" id="RHEA:16645"/>
        <dbReference type="ChEBI" id="CHEBI:7896"/>
        <dbReference type="ChEBI" id="CHEBI:15377"/>
        <dbReference type="ChEBI" id="CHEBI:15378"/>
        <dbReference type="ChEBI" id="CHEBI:57287"/>
        <dbReference type="ChEBI" id="CHEBI:57379"/>
        <dbReference type="EC" id="3.1.2.2"/>
    </reaction>
    <physiologicalReaction direction="left-to-right" evidence="2">
        <dbReference type="Rhea" id="RHEA:16646"/>
    </physiologicalReaction>
</comment>
<comment type="catalytic activity">
    <reaction evidence="2">
        <text>octanoyl-CoA + H2O = octanoate + CoA + H(+)</text>
        <dbReference type="Rhea" id="RHEA:30143"/>
        <dbReference type="ChEBI" id="CHEBI:15377"/>
        <dbReference type="ChEBI" id="CHEBI:15378"/>
        <dbReference type="ChEBI" id="CHEBI:25646"/>
        <dbReference type="ChEBI" id="CHEBI:57287"/>
        <dbReference type="ChEBI" id="CHEBI:57386"/>
    </reaction>
    <physiologicalReaction direction="left-to-right" evidence="2">
        <dbReference type="Rhea" id="RHEA:30144"/>
    </physiologicalReaction>
</comment>
<comment type="catalytic activity">
    <reaction evidence="2">
        <text>decanoyl-CoA + H2O = decanoate + CoA + H(+)</text>
        <dbReference type="Rhea" id="RHEA:40059"/>
        <dbReference type="ChEBI" id="CHEBI:15377"/>
        <dbReference type="ChEBI" id="CHEBI:15378"/>
        <dbReference type="ChEBI" id="CHEBI:27689"/>
        <dbReference type="ChEBI" id="CHEBI:57287"/>
        <dbReference type="ChEBI" id="CHEBI:61430"/>
    </reaction>
    <physiologicalReaction direction="left-to-right" evidence="2">
        <dbReference type="Rhea" id="RHEA:40060"/>
    </physiologicalReaction>
</comment>
<comment type="catalytic activity">
    <reaction evidence="2">
        <text>tetradecanoyl-CoA + H2O = tetradecanoate + CoA + H(+)</text>
        <dbReference type="Rhea" id="RHEA:40119"/>
        <dbReference type="ChEBI" id="CHEBI:15377"/>
        <dbReference type="ChEBI" id="CHEBI:15378"/>
        <dbReference type="ChEBI" id="CHEBI:30807"/>
        <dbReference type="ChEBI" id="CHEBI:57287"/>
        <dbReference type="ChEBI" id="CHEBI:57385"/>
    </reaction>
    <physiologicalReaction direction="left-to-right" evidence="2">
        <dbReference type="Rhea" id="RHEA:40120"/>
    </physiologicalReaction>
</comment>
<comment type="catalytic activity">
    <reaction evidence="2">
        <text>4,8-dimethylnonanoyl-CoA + H2O = 4,8-dimethylnonanoate + CoA + H(+)</text>
        <dbReference type="Rhea" id="RHEA:40223"/>
        <dbReference type="ChEBI" id="CHEBI:15377"/>
        <dbReference type="ChEBI" id="CHEBI:15378"/>
        <dbReference type="ChEBI" id="CHEBI:57287"/>
        <dbReference type="ChEBI" id="CHEBI:77061"/>
        <dbReference type="ChEBI" id="CHEBI:77063"/>
    </reaction>
    <physiologicalReaction direction="left-to-right" evidence="2">
        <dbReference type="Rhea" id="RHEA:40224"/>
    </physiologicalReaction>
</comment>
<comment type="catalytic activity">
    <reaction evidence="2">
        <text>3-methylbutanoyl-CoA + H2O = 3-methylbutanoate + CoA + H(+)</text>
        <dbReference type="Rhea" id="RHEA:66984"/>
        <dbReference type="ChEBI" id="CHEBI:15377"/>
        <dbReference type="ChEBI" id="CHEBI:15378"/>
        <dbReference type="ChEBI" id="CHEBI:48942"/>
        <dbReference type="ChEBI" id="CHEBI:57287"/>
        <dbReference type="ChEBI" id="CHEBI:57345"/>
    </reaction>
    <physiologicalReaction direction="left-to-right" evidence="2">
        <dbReference type="Rhea" id="RHEA:66985"/>
    </physiologicalReaction>
</comment>
<comment type="catalytic activity">
    <reaction evidence="2">
        <text>2-methylpropanoyl-CoA + H2O = 2-methylpropanoate + CoA + H(+)</text>
        <dbReference type="Rhea" id="RHEA:40799"/>
        <dbReference type="ChEBI" id="CHEBI:15377"/>
        <dbReference type="ChEBI" id="CHEBI:15378"/>
        <dbReference type="ChEBI" id="CHEBI:48944"/>
        <dbReference type="ChEBI" id="CHEBI:57287"/>
        <dbReference type="ChEBI" id="CHEBI:57338"/>
    </reaction>
    <physiologicalReaction direction="left-to-right" evidence="2">
        <dbReference type="Rhea" id="RHEA:40800"/>
    </physiologicalReaction>
</comment>
<comment type="activity regulation">
    <text evidence="2">Strongly inhibited by NADH and CoA.</text>
</comment>
<comment type="pathway">
    <text evidence="2">Lipid metabolism; fatty acid metabolism.</text>
</comment>
<comment type="subunit">
    <text evidence="1">Interacts with NYAP1, NYAP2 and MYO16.</text>
</comment>
<comment type="subcellular location">
    <subcellularLocation>
        <location evidence="2">Mitochondrion</location>
    </subcellularLocation>
    <subcellularLocation>
        <location evidence="2">Mitochondrion matrix</location>
    </subcellularLocation>
    <subcellularLocation>
        <location evidence="2">Mitochondrion inner membrane</location>
    </subcellularLocation>
</comment>
<comment type="similarity">
    <text evidence="5">Belongs to the acyl coenzyme A hydrolase family.</text>
</comment>
<name>ACOT9_BOVIN</name>
<sequence length="437" mass="49853">MRRAALRLCTLSKGLLAPSRGLTQESQNPENVFHIREVRDKLREIVGASTNWRDHVKAMEERKLLHSFLAKSQKGLPPRTMKDSYIEVFLPLGSQPELREKYLTVQNTVRFGRILEDLDSLGVLICYMHNKIHSAKMSPLSIVTALVDKIDMCKKNLSPEQDIKFSGHVSWVGKTSMEVKMHMFQLHGNDFSPVLDATFVMVARDSENKGPAFVNPLILESPEEEELFQQGELNKGRRVAFSSTSLLKMAPTAEERTTIHEMFLNTLDPKTISFRSRVLPANSVWMENSKLKSLDICHPQERNIFNRIFGGFLMRKAYELGWATACNFGGSRPFIVAVDDIMFQKPVEVGSLLFLSAQVCFTQGNYIQVRVHSEVASLQDKEHMTTNVFHFTFMSEKEVPLVFPRTYGESMLYLDGQRHFKSMSAPVTLKRNYVVEP</sequence>
<protein>
    <recommendedName>
        <fullName>Acyl-coenzyme A thioesterase 9, mitochondrial</fullName>
        <shortName>Acyl-CoA thioesterase 9</shortName>
        <ecNumber evidence="2">3.1.2.-</ecNumber>
        <ecNumber evidence="2">3.1.2.2</ecNumber>
    </recommendedName>
    <alternativeName>
        <fullName>Acyl-CoA thioester hydrolase 9</fullName>
    </alternativeName>
</protein>
<accession>Q3SWX2</accession>
<evidence type="ECO:0000250" key="1"/>
<evidence type="ECO:0000250" key="2">
    <source>
        <dbReference type="UniProtKB" id="Q9R0X4"/>
    </source>
</evidence>
<evidence type="ECO:0000250" key="3">
    <source>
        <dbReference type="UniProtKB" id="Q9Y305"/>
    </source>
</evidence>
<evidence type="ECO:0000255" key="4">
    <source>
        <dbReference type="PROSITE-ProRule" id="PRU01106"/>
    </source>
</evidence>
<evidence type="ECO:0000305" key="5"/>
<proteinExistence type="evidence at transcript level"/>
<dbReference type="EC" id="3.1.2.-" evidence="2"/>
<dbReference type="EC" id="3.1.2.2" evidence="2"/>
<dbReference type="EMBL" id="BT030514">
    <property type="protein sequence ID" value="ABQ12954.1"/>
    <property type="molecule type" value="mRNA"/>
</dbReference>
<dbReference type="EMBL" id="BC104625">
    <property type="protein sequence ID" value="AAI04626.1"/>
    <property type="molecule type" value="mRNA"/>
</dbReference>
<dbReference type="RefSeq" id="NP_001029732.1">
    <property type="nucleotide sequence ID" value="NM_001034560.1"/>
</dbReference>
<dbReference type="SMR" id="Q3SWX2"/>
<dbReference type="FunCoup" id="Q3SWX2">
    <property type="interactions" value="1657"/>
</dbReference>
<dbReference type="STRING" id="9913.ENSBTAP00000014953"/>
<dbReference type="PaxDb" id="9913-ENSBTAP00000014953"/>
<dbReference type="Ensembl" id="ENSBTAT00000014953.5">
    <property type="protein sequence ID" value="ENSBTAP00000014953.4"/>
    <property type="gene ID" value="ENSBTAG00000011258.6"/>
</dbReference>
<dbReference type="GeneID" id="527845"/>
<dbReference type="KEGG" id="bta:527845"/>
<dbReference type="CTD" id="23597"/>
<dbReference type="VEuPathDB" id="HostDB:ENSBTAG00000011258"/>
<dbReference type="VGNC" id="VGNC:25551">
    <property type="gene designation" value="ACOT9"/>
</dbReference>
<dbReference type="eggNOG" id="KOG2763">
    <property type="taxonomic scope" value="Eukaryota"/>
</dbReference>
<dbReference type="GeneTree" id="ENSGT00390000005330"/>
<dbReference type="HOGENOM" id="CLU_032862_2_1_1"/>
<dbReference type="InParanoid" id="Q3SWX2"/>
<dbReference type="OMA" id="QFNYTFL"/>
<dbReference type="OrthoDB" id="331699at2759"/>
<dbReference type="TreeFam" id="TF313352"/>
<dbReference type="Reactome" id="R-BTA-77289">
    <property type="pathway name" value="Mitochondrial Fatty Acid Beta-Oxidation"/>
</dbReference>
<dbReference type="UniPathway" id="UPA00199"/>
<dbReference type="Proteomes" id="UP000009136">
    <property type="component" value="Chromosome X"/>
</dbReference>
<dbReference type="Bgee" id="ENSBTAG00000011258">
    <property type="expression patterns" value="Expressed in oocyte and 104 other cell types or tissues"/>
</dbReference>
<dbReference type="GO" id="GO:0005743">
    <property type="term" value="C:mitochondrial inner membrane"/>
    <property type="evidence" value="ECO:0000250"/>
    <property type="project" value="UniProtKB"/>
</dbReference>
<dbReference type="GO" id="GO:0005759">
    <property type="term" value="C:mitochondrial matrix"/>
    <property type="evidence" value="ECO:0000250"/>
    <property type="project" value="UniProtKB"/>
</dbReference>
<dbReference type="GO" id="GO:0005739">
    <property type="term" value="C:mitochondrion"/>
    <property type="evidence" value="ECO:0000318"/>
    <property type="project" value="GO_Central"/>
</dbReference>
<dbReference type="GO" id="GO:0052689">
    <property type="term" value="F:carboxylic ester hydrolase activity"/>
    <property type="evidence" value="ECO:0007669"/>
    <property type="project" value="UniProtKB-KW"/>
</dbReference>
<dbReference type="GO" id="GO:0047617">
    <property type="term" value="F:fatty acyl-CoA hydrolase activity"/>
    <property type="evidence" value="ECO:0000318"/>
    <property type="project" value="GO_Central"/>
</dbReference>
<dbReference type="GO" id="GO:0006637">
    <property type="term" value="P:acyl-CoA metabolic process"/>
    <property type="evidence" value="ECO:0000318"/>
    <property type="project" value="GO_Central"/>
</dbReference>
<dbReference type="GO" id="GO:0001676">
    <property type="term" value="P:long-chain fatty acid metabolic process"/>
    <property type="evidence" value="ECO:0000250"/>
    <property type="project" value="UniProtKB"/>
</dbReference>
<dbReference type="GO" id="GO:0046459">
    <property type="term" value="P:short-chain fatty acid metabolic process"/>
    <property type="evidence" value="ECO:0000250"/>
    <property type="project" value="UniProtKB"/>
</dbReference>
<dbReference type="CDD" id="cd03442">
    <property type="entry name" value="BFIT_BACH"/>
    <property type="match status" value="2"/>
</dbReference>
<dbReference type="FunFam" id="3.10.129.10:FF:000012">
    <property type="entry name" value="Acyl-coenzyme A thioesterase 9, mitochondrial"/>
    <property type="match status" value="1"/>
</dbReference>
<dbReference type="FunFam" id="3.10.129.10:FF:000016">
    <property type="entry name" value="Acyl-coenzyme A thioesterase 9, mitochondrial"/>
    <property type="match status" value="1"/>
</dbReference>
<dbReference type="Gene3D" id="3.10.129.10">
    <property type="entry name" value="Hotdog Thioesterase"/>
    <property type="match status" value="2"/>
</dbReference>
<dbReference type="InterPro" id="IPR033120">
    <property type="entry name" value="HOTDOG_ACOT"/>
</dbReference>
<dbReference type="InterPro" id="IPR029069">
    <property type="entry name" value="HotDog_dom_sf"/>
</dbReference>
<dbReference type="PANTHER" id="PTHR12655">
    <property type="entry name" value="ACYL-COA THIOESTERASE"/>
    <property type="match status" value="1"/>
</dbReference>
<dbReference type="PANTHER" id="PTHR12655:SF0">
    <property type="entry name" value="ACYL-COENZYME A THIOESTERASE 9, MITOCHONDRIAL"/>
    <property type="match status" value="1"/>
</dbReference>
<dbReference type="SUPFAM" id="SSF54637">
    <property type="entry name" value="Thioesterase/thiol ester dehydrase-isomerase"/>
    <property type="match status" value="2"/>
</dbReference>
<dbReference type="PROSITE" id="PS51770">
    <property type="entry name" value="HOTDOG_ACOT"/>
    <property type="match status" value="2"/>
</dbReference>
<reference key="1">
    <citation type="journal article" date="2005" name="BMC Genomics">
        <title>Characterization of 954 bovine full-CDS cDNA sequences.</title>
        <authorList>
            <person name="Harhay G.P."/>
            <person name="Sonstegard T.S."/>
            <person name="Keele J.W."/>
            <person name="Heaton M.P."/>
            <person name="Clawson M.L."/>
            <person name="Snelling W.M."/>
            <person name="Wiedmann R.T."/>
            <person name="Van Tassell C.P."/>
            <person name="Smith T.P.L."/>
        </authorList>
    </citation>
    <scope>NUCLEOTIDE SEQUENCE [LARGE SCALE MRNA]</scope>
</reference>
<reference key="2">
    <citation type="submission" date="2005-09" db="EMBL/GenBank/DDBJ databases">
        <authorList>
            <consortium name="NIH - Mammalian Gene Collection (MGC) project"/>
        </authorList>
    </citation>
    <scope>NUCLEOTIDE SEQUENCE [LARGE SCALE MRNA]</scope>
    <source>
        <strain>Hereford</strain>
        <tissue>Ascending colon</tissue>
    </source>
</reference>